<reference key="1">
    <citation type="journal article" date="2005" name="BMC Biol.">
        <title>The sequence of rice chromosomes 11 and 12, rich in disease resistance genes and recent gene duplications.</title>
        <authorList>
            <consortium name="The rice chromosomes 11 and 12 sequencing consortia"/>
        </authorList>
    </citation>
    <scope>NUCLEOTIDE SEQUENCE [LARGE SCALE GENOMIC DNA]</scope>
    <source>
        <strain>cv. Nipponbare</strain>
    </source>
</reference>
<reference key="2">
    <citation type="journal article" date="2005" name="Nature">
        <title>The map-based sequence of the rice genome.</title>
        <authorList>
            <consortium name="International rice genome sequencing project (IRGSP)"/>
        </authorList>
    </citation>
    <scope>NUCLEOTIDE SEQUENCE [LARGE SCALE GENOMIC DNA]</scope>
    <source>
        <strain>cv. Nipponbare</strain>
    </source>
</reference>
<reference key="3">
    <citation type="journal article" date="2008" name="Nucleic Acids Res.">
        <title>The rice annotation project database (RAP-DB): 2008 update.</title>
        <authorList>
            <consortium name="The rice annotation project (RAP)"/>
        </authorList>
    </citation>
    <scope>GENOME REANNOTATION</scope>
    <source>
        <strain>cv. Nipponbare</strain>
    </source>
</reference>
<reference key="4">
    <citation type="journal article" date="2013" name="Rice">
        <title>Improvement of the Oryza sativa Nipponbare reference genome using next generation sequence and optical map data.</title>
        <authorList>
            <person name="Kawahara Y."/>
            <person name="de la Bastide M."/>
            <person name="Hamilton J.P."/>
            <person name="Kanamori H."/>
            <person name="McCombie W.R."/>
            <person name="Ouyang S."/>
            <person name="Schwartz D.C."/>
            <person name="Tanaka T."/>
            <person name="Wu J."/>
            <person name="Zhou S."/>
            <person name="Childs K.L."/>
            <person name="Davidson R.M."/>
            <person name="Lin H."/>
            <person name="Quesada-Ocampo L."/>
            <person name="Vaillancourt B."/>
            <person name="Sakai H."/>
            <person name="Lee S.S."/>
            <person name="Kim J."/>
            <person name="Numa H."/>
            <person name="Itoh T."/>
            <person name="Buell C.R."/>
            <person name="Matsumoto T."/>
        </authorList>
    </citation>
    <scope>GENOME REANNOTATION</scope>
    <source>
        <strain>cv. Nipponbare</strain>
    </source>
</reference>
<reference key="5">
    <citation type="journal article" date="2005" name="PLoS Biol.">
        <title>The genomes of Oryza sativa: a history of duplications.</title>
        <authorList>
            <person name="Yu J."/>
            <person name="Wang J."/>
            <person name="Lin W."/>
            <person name="Li S."/>
            <person name="Li H."/>
            <person name="Zhou J."/>
            <person name="Ni P."/>
            <person name="Dong W."/>
            <person name="Hu S."/>
            <person name="Zeng C."/>
            <person name="Zhang J."/>
            <person name="Zhang Y."/>
            <person name="Li R."/>
            <person name="Xu Z."/>
            <person name="Li S."/>
            <person name="Li X."/>
            <person name="Zheng H."/>
            <person name="Cong L."/>
            <person name="Lin L."/>
            <person name="Yin J."/>
            <person name="Geng J."/>
            <person name="Li G."/>
            <person name="Shi J."/>
            <person name="Liu J."/>
            <person name="Lv H."/>
            <person name="Li J."/>
            <person name="Wang J."/>
            <person name="Deng Y."/>
            <person name="Ran L."/>
            <person name="Shi X."/>
            <person name="Wang X."/>
            <person name="Wu Q."/>
            <person name="Li C."/>
            <person name="Ren X."/>
            <person name="Wang J."/>
            <person name="Wang X."/>
            <person name="Li D."/>
            <person name="Liu D."/>
            <person name="Zhang X."/>
            <person name="Ji Z."/>
            <person name="Zhao W."/>
            <person name="Sun Y."/>
            <person name="Zhang Z."/>
            <person name="Bao J."/>
            <person name="Han Y."/>
            <person name="Dong L."/>
            <person name="Ji J."/>
            <person name="Chen P."/>
            <person name="Wu S."/>
            <person name="Liu J."/>
            <person name="Xiao Y."/>
            <person name="Bu D."/>
            <person name="Tan J."/>
            <person name="Yang L."/>
            <person name="Ye C."/>
            <person name="Zhang J."/>
            <person name="Xu J."/>
            <person name="Zhou Y."/>
            <person name="Yu Y."/>
            <person name="Zhang B."/>
            <person name="Zhuang S."/>
            <person name="Wei H."/>
            <person name="Liu B."/>
            <person name="Lei M."/>
            <person name="Yu H."/>
            <person name="Li Y."/>
            <person name="Xu H."/>
            <person name="Wei S."/>
            <person name="He X."/>
            <person name="Fang L."/>
            <person name="Zhang Z."/>
            <person name="Zhang Y."/>
            <person name="Huang X."/>
            <person name="Su Z."/>
            <person name="Tong W."/>
            <person name="Li J."/>
            <person name="Tong Z."/>
            <person name="Li S."/>
            <person name="Ye J."/>
            <person name="Wang L."/>
            <person name="Fang L."/>
            <person name="Lei T."/>
            <person name="Chen C.-S."/>
            <person name="Chen H.-C."/>
            <person name="Xu Z."/>
            <person name="Li H."/>
            <person name="Huang H."/>
            <person name="Zhang F."/>
            <person name="Xu H."/>
            <person name="Li N."/>
            <person name="Zhao C."/>
            <person name="Li S."/>
            <person name="Dong L."/>
            <person name="Huang Y."/>
            <person name="Li L."/>
            <person name="Xi Y."/>
            <person name="Qi Q."/>
            <person name="Li W."/>
            <person name="Zhang B."/>
            <person name="Hu W."/>
            <person name="Zhang Y."/>
            <person name="Tian X."/>
            <person name="Jiao Y."/>
            <person name="Liang X."/>
            <person name="Jin J."/>
            <person name="Gao L."/>
            <person name="Zheng W."/>
            <person name="Hao B."/>
            <person name="Liu S.-M."/>
            <person name="Wang W."/>
            <person name="Yuan L."/>
            <person name="Cao M."/>
            <person name="McDermott J."/>
            <person name="Samudrala R."/>
            <person name="Wang J."/>
            <person name="Wong G.K.-S."/>
            <person name="Yang H."/>
        </authorList>
    </citation>
    <scope>NUCLEOTIDE SEQUENCE [LARGE SCALE GENOMIC DNA]</scope>
    <source>
        <strain>cv. Nipponbare</strain>
    </source>
</reference>
<reference key="6">
    <citation type="journal article" date="2003" name="Science">
        <title>Collection, mapping, and annotation of over 28,000 cDNA clones from japonica rice.</title>
        <authorList>
            <consortium name="The rice full-length cDNA consortium"/>
        </authorList>
    </citation>
    <scope>NUCLEOTIDE SEQUENCE [LARGE SCALE MRNA] (ISOFORMS 1; 2 AND 3)</scope>
    <source>
        <strain>cv. Nipponbare</strain>
    </source>
</reference>
<reference key="7">
    <citation type="journal article" date="2004" name="Plant Cell">
        <title>Chloroplast elongation factor ts pro-protein is an evolutionarily conserved fusion with the s1 domain-containing plastid-specific ribosomal protein-7.</title>
        <authorList>
            <person name="Beligni M.V."/>
            <person name="Yamaguchi K."/>
            <person name="Mayfield S.P."/>
        </authorList>
    </citation>
    <scope>GENE FAMILY</scope>
</reference>
<sequence>MTPVVHCSVGNISLFHIGSFRPSHEIQIRRFRSTERYSRVPSRRLLQPQRAFNLISIYKRSSWSSARRPRTLSAATVGTDVTVEDPNPPPSGETSEESSEDTAPDTAEASEQAEASTSSIPKAGRNIRKSEMPPLNDEDLVPGASFTGKVRSIKPFGVFVDIGAFTEGLVHISRVSDGFVKDISSLFTVGQEVSVRLVEANKETGRISLTMRTGGDYVKPKTETPKAASGGRNTTATTSRGSPRQTRERDEAKSMGETNYVQGQFLDGVVKNSTRAGSFVTLPDGSEGFLPREEEAVALFTLIGHSALEVGQQVRVKVLNVVRGQVTLTMKEGEDDEEDLASLNTQLKQGWSRGTNAFELAFRRNKEISAFLDQREKIIVPDVQEAAVASVGTELDAEVGIEQSPGKEPETGNAESVAIDSSITEVKETDSIAAVEKDSEISKTESVETASSVVISEDDSTVDGKLVEPTASVSATETEIKEDSSEGSVTTEPTEAASTEFVTAVVEESAPTASSVETSEDDSTVDDKLVEPTASVSATEAESKEDSSEGSVASTESVTAVVEESAPVSSVAIEVPAPEASEASAQEIIEDSTTVEGAADDQTVESDSPPPEGVELSSNGAPDSSIAEDKPDEPEESLIVEEVPVTASSESEDKEPAAVPEEVAASSEKTADVAVAGAEASTATATISPALVKQLREATGAGMMDCKKALAESGGDIEKAQEFLRKKGLAAADKRAGRATAEGRIGSYIHDSRIGVLIEVNCETDFVSRGDIFKELVDDLAMQVAACPQVQYISLDDVPEEVMKKETELEMQREDLLSKPEQIRSKIVEGRVKKRLGEYALLEQPFIKNDKVTISEWVKQTIATIGENMKVNRFVRYNLGEGLEKRSQDFAAEVAAQTAAKAPPAAPPKDDKPEETAETEEKKPAVAISAALVKQLRDETGAGMMDCKKALAETGGDIQQAQEFLRKKGLSSADKKSSRLTAEGLIGAYIHDNRIGCMIEINSETDFVARNEKFKELVNDLAMQVVACPQVEYVSIEDIPESVVIKEKEIEMQREDLQSKPENIREKIVEGRISKRLGVLALLEQPFIKDDSKTVKDLVKETIATLGENIKVRRFTRYTLGEN</sequence>
<dbReference type="EMBL" id="DP000011">
    <property type="protein sequence ID" value="ABA99456.1"/>
    <property type="molecule type" value="Genomic_DNA"/>
</dbReference>
<dbReference type="EMBL" id="AP008218">
    <property type="protein sequence ID" value="BAF29975.1"/>
    <property type="molecule type" value="Genomic_DNA"/>
</dbReference>
<dbReference type="EMBL" id="AP014968">
    <property type="protein sequence ID" value="BAT17508.1"/>
    <property type="molecule type" value="Genomic_DNA"/>
</dbReference>
<dbReference type="EMBL" id="AP014968">
    <property type="protein sequence ID" value="BAT17509.1"/>
    <property type="molecule type" value="Genomic_DNA"/>
</dbReference>
<dbReference type="EMBL" id="CM000149">
    <property type="protein sequence ID" value="EAZ20768.1"/>
    <property type="molecule type" value="Genomic_DNA"/>
</dbReference>
<dbReference type="EMBL" id="AK062564">
    <property type="status" value="NOT_ANNOTATED_CDS"/>
    <property type="molecule type" value="mRNA"/>
</dbReference>
<dbReference type="EMBL" id="AK065699">
    <property type="status" value="NOT_ANNOTATED_CDS"/>
    <property type="molecule type" value="mRNA"/>
</dbReference>
<dbReference type="EMBL" id="AK067367">
    <property type="status" value="NOT_ANNOTATED_CDS"/>
    <property type="molecule type" value="mRNA"/>
</dbReference>
<dbReference type="EMBL" id="AK069200">
    <property type="status" value="NOT_ANNOTATED_CDS"/>
    <property type="molecule type" value="mRNA"/>
</dbReference>
<dbReference type="RefSeq" id="XP_015619919.1">
    <property type="nucleotide sequence ID" value="XM_015764433.1"/>
</dbReference>
<dbReference type="SMR" id="Q2QP54"/>
<dbReference type="FunCoup" id="Q2QP54">
    <property type="interactions" value="1682"/>
</dbReference>
<dbReference type="STRING" id="39947.Q2QP54"/>
<dbReference type="PaxDb" id="39947-Q2QP54"/>
<dbReference type="EnsemblPlants" id="Os12t0541500-02">
    <molecule id="Q2QP54-1"/>
    <property type="protein sequence ID" value="Os12t0541500-02"/>
    <property type="gene ID" value="Os12g0541500"/>
</dbReference>
<dbReference type="Gramene" id="Os12t0541500-02">
    <molecule id="Q2QP54-1"/>
    <property type="protein sequence ID" value="Os12t0541500-02"/>
    <property type="gene ID" value="Os12g0541500"/>
</dbReference>
<dbReference type="KEGG" id="dosa:Os12g0541500"/>
<dbReference type="eggNOG" id="KOG1071">
    <property type="taxonomic scope" value="Eukaryota"/>
</dbReference>
<dbReference type="HOGENOM" id="CLU_012395_0_0_1"/>
<dbReference type="InParanoid" id="Q2QP54"/>
<dbReference type="OMA" id="MQVAAYP"/>
<dbReference type="OrthoDB" id="277235at2759"/>
<dbReference type="Proteomes" id="UP000000763">
    <property type="component" value="Chromosome 12"/>
</dbReference>
<dbReference type="Proteomes" id="UP000007752">
    <property type="component" value="Chromosome 12"/>
</dbReference>
<dbReference type="Proteomes" id="UP000059680">
    <property type="component" value="Chromosome 12"/>
</dbReference>
<dbReference type="ExpressionAtlas" id="Q2QP54">
    <property type="expression patterns" value="baseline and differential"/>
</dbReference>
<dbReference type="GO" id="GO:0009507">
    <property type="term" value="C:chloroplast"/>
    <property type="evidence" value="ECO:0000250"/>
    <property type="project" value="UniProtKB"/>
</dbReference>
<dbReference type="GO" id="GO:0043253">
    <property type="term" value="C:chloroplast ribosome"/>
    <property type="evidence" value="ECO:0000250"/>
    <property type="project" value="UniProtKB"/>
</dbReference>
<dbReference type="GO" id="GO:0005739">
    <property type="term" value="C:mitochondrion"/>
    <property type="evidence" value="ECO:0007669"/>
    <property type="project" value="UniProtKB-UniRule"/>
</dbReference>
<dbReference type="GO" id="GO:0003729">
    <property type="term" value="F:mRNA binding"/>
    <property type="evidence" value="ECO:0000250"/>
    <property type="project" value="UniProtKB"/>
</dbReference>
<dbReference type="GO" id="GO:0003746">
    <property type="term" value="F:translation elongation factor activity"/>
    <property type="evidence" value="ECO:0000318"/>
    <property type="project" value="GO_Central"/>
</dbReference>
<dbReference type="GO" id="GO:0061770">
    <property type="term" value="F:translation elongation factor binding"/>
    <property type="evidence" value="ECO:0000250"/>
    <property type="project" value="UniProtKB"/>
</dbReference>
<dbReference type="GO" id="GO:0070125">
    <property type="term" value="P:mitochondrial translational elongation"/>
    <property type="evidence" value="ECO:0000318"/>
    <property type="project" value="GO_Central"/>
</dbReference>
<dbReference type="CDD" id="cd14275">
    <property type="entry name" value="UBA_EF-Ts"/>
    <property type="match status" value="2"/>
</dbReference>
<dbReference type="FunFam" id="1.10.286.20:FF:000001">
    <property type="entry name" value="Elongation factor Ts"/>
    <property type="match status" value="2"/>
</dbReference>
<dbReference type="FunFam" id="1.10.8.10:FF:000001">
    <property type="entry name" value="Elongation factor Ts"/>
    <property type="match status" value="2"/>
</dbReference>
<dbReference type="FunFam" id="2.40.50.140:FF:000250">
    <property type="entry name" value="Elongation factor Ts, mitochondrial"/>
    <property type="match status" value="1"/>
</dbReference>
<dbReference type="FunFam" id="2.40.50.140:FF:000051">
    <property type="entry name" value="RNA-binding transcriptional accessory protein"/>
    <property type="match status" value="1"/>
</dbReference>
<dbReference type="Gene3D" id="1.10.286.20">
    <property type="match status" value="2"/>
</dbReference>
<dbReference type="Gene3D" id="1.10.8.10">
    <property type="entry name" value="DNA helicase RuvA subunit, C-terminal domain"/>
    <property type="match status" value="2"/>
</dbReference>
<dbReference type="Gene3D" id="3.30.479.20">
    <property type="entry name" value="Elongation factor Ts, dimerisation domain"/>
    <property type="match status" value="2"/>
</dbReference>
<dbReference type="Gene3D" id="2.40.50.140">
    <property type="entry name" value="Nucleic acid-binding proteins"/>
    <property type="match status" value="2"/>
</dbReference>
<dbReference type="HAMAP" id="MF_00050">
    <property type="entry name" value="EF_Ts"/>
    <property type="match status" value="2"/>
</dbReference>
<dbReference type="InterPro" id="IPR036402">
    <property type="entry name" value="EF-Ts_dimer_sf"/>
</dbReference>
<dbReference type="InterPro" id="IPR012340">
    <property type="entry name" value="NA-bd_OB-fold"/>
</dbReference>
<dbReference type="InterPro" id="IPR003029">
    <property type="entry name" value="S1_domain"/>
</dbReference>
<dbReference type="InterPro" id="IPR001816">
    <property type="entry name" value="Transl_elong_EFTs/EF1B"/>
</dbReference>
<dbReference type="InterPro" id="IPR014039">
    <property type="entry name" value="Transl_elong_EFTs/EF1B_dimer"/>
</dbReference>
<dbReference type="InterPro" id="IPR018101">
    <property type="entry name" value="Transl_elong_Ts_CS"/>
</dbReference>
<dbReference type="InterPro" id="IPR009060">
    <property type="entry name" value="UBA-like_sf"/>
</dbReference>
<dbReference type="NCBIfam" id="TIGR00116">
    <property type="entry name" value="tsf"/>
    <property type="match status" value="3"/>
</dbReference>
<dbReference type="PANTHER" id="PTHR11741">
    <property type="entry name" value="ELONGATION FACTOR TS"/>
    <property type="match status" value="1"/>
</dbReference>
<dbReference type="PANTHER" id="PTHR11741:SF10">
    <property type="entry name" value="POLYPROTEIN OF EF-TS, CHLOROPLASTIC"/>
    <property type="match status" value="1"/>
</dbReference>
<dbReference type="Pfam" id="PF00889">
    <property type="entry name" value="EF_TS"/>
    <property type="match status" value="2"/>
</dbReference>
<dbReference type="Pfam" id="PF00575">
    <property type="entry name" value="S1"/>
    <property type="match status" value="1"/>
</dbReference>
<dbReference type="SMART" id="SM00316">
    <property type="entry name" value="S1"/>
    <property type="match status" value="2"/>
</dbReference>
<dbReference type="SUPFAM" id="SSF54713">
    <property type="entry name" value="Elongation factor Ts (EF-Ts), dimerisation domain"/>
    <property type="match status" value="2"/>
</dbReference>
<dbReference type="SUPFAM" id="SSF50249">
    <property type="entry name" value="Nucleic acid-binding proteins"/>
    <property type="match status" value="2"/>
</dbReference>
<dbReference type="SUPFAM" id="SSF46934">
    <property type="entry name" value="UBA-like"/>
    <property type="match status" value="2"/>
</dbReference>
<dbReference type="PROSITE" id="PS01126">
    <property type="entry name" value="EF_TS_1"/>
    <property type="match status" value="2"/>
</dbReference>
<dbReference type="PROSITE" id="PS01127">
    <property type="entry name" value="EF_TS_2"/>
    <property type="match status" value="2"/>
</dbReference>
<dbReference type="PROSITE" id="PS50126">
    <property type="entry name" value="S1"/>
    <property type="match status" value="2"/>
</dbReference>
<feature type="transit peptide" description="Chloroplast" evidence="2">
    <location>
        <begin position="1"/>
        <end position="73"/>
    </location>
</feature>
<feature type="chain" id="PRO_0000449225" description="Polyprotein of EF-Ts, chloroplastic">
    <location>
        <begin position="74"/>
        <end position="1123"/>
    </location>
</feature>
<feature type="chain" id="PRO_0000449226" description="Plastid-specific ribosomal protein-7, chloroplastic">
    <location>
        <begin position="74"/>
        <end position="686"/>
    </location>
</feature>
<feature type="chain" id="PRO_0000449227" description="Elongation factor Ts, chloroplastic">
    <location>
        <begin position="687"/>
        <end position="1123"/>
    </location>
</feature>
<feature type="domain" description="S1 motif 1" evidence="3">
    <location>
        <begin position="143"/>
        <end position="212"/>
    </location>
</feature>
<feature type="domain" description="S1 motif 2" evidence="3">
    <location>
        <begin position="263"/>
        <end position="331"/>
    </location>
</feature>
<feature type="region of interest" description="Disordered" evidence="4">
    <location>
        <begin position="68"/>
        <end position="141"/>
    </location>
</feature>
<feature type="region of interest" description="Disordered" evidence="4">
    <location>
        <begin position="213"/>
        <end position="258"/>
    </location>
</feature>
<feature type="region of interest" description="Disordered" evidence="4">
    <location>
        <begin position="443"/>
        <end position="670"/>
    </location>
</feature>
<feature type="region of interest" description="Disordered" evidence="4">
    <location>
        <begin position="894"/>
        <end position="923"/>
    </location>
</feature>
<feature type="compositionally biased region" description="Acidic residues" evidence="4">
    <location>
        <begin position="94"/>
        <end position="103"/>
    </location>
</feature>
<feature type="compositionally biased region" description="Low complexity" evidence="4">
    <location>
        <begin position="106"/>
        <end position="119"/>
    </location>
</feature>
<feature type="compositionally biased region" description="Polar residues" evidence="4">
    <location>
        <begin position="231"/>
        <end position="244"/>
    </location>
</feature>
<feature type="compositionally biased region" description="Basic and acidic residues" evidence="4">
    <location>
        <begin position="245"/>
        <end position="254"/>
    </location>
</feature>
<feature type="compositionally biased region" description="Polar residues" evidence="4">
    <location>
        <begin position="486"/>
        <end position="501"/>
    </location>
</feature>
<feature type="compositionally biased region" description="Low complexity" evidence="4">
    <location>
        <begin position="551"/>
        <end position="587"/>
    </location>
</feature>
<feature type="compositionally biased region" description="Acidic residues" evidence="4">
    <location>
        <begin position="630"/>
        <end position="639"/>
    </location>
</feature>
<feature type="compositionally biased region" description="Low complexity" evidence="4">
    <location>
        <begin position="657"/>
        <end position="670"/>
    </location>
</feature>
<feature type="compositionally biased region" description="Low complexity" evidence="4">
    <location>
        <begin position="894"/>
        <end position="903"/>
    </location>
</feature>
<feature type="compositionally biased region" description="Basic and acidic residues" evidence="4">
    <location>
        <begin position="908"/>
        <end position="923"/>
    </location>
</feature>
<feature type="splice variant" id="VSP_060534" description="In isoform 3." evidence="6">
    <location>
        <begin position="604"/>
        <end position="1123"/>
    </location>
</feature>
<feature type="splice variant" id="VSP_060535" description="In isoform 2." evidence="6">
    <original>ATI</original>
    <variation>GQQ</variation>
    <location>
        <begin position="685"/>
        <end position="687"/>
    </location>
</feature>
<feature type="splice variant" id="VSP_060536" description="In isoform 2." evidence="6">
    <location>
        <begin position="688"/>
        <end position="1123"/>
    </location>
</feature>
<feature type="sequence conflict" description="In Ref. 6; AK065699." evidence="6" ref="6">
    <original>F</original>
    <variation>L</variation>
    <location>
        <position position="159"/>
    </location>
</feature>
<feature type="sequence conflict" description="In Ref. 6; AK069200." evidence="6" ref="6">
    <original>V</original>
    <variation>E</variation>
    <location>
        <position position="193"/>
    </location>
</feature>
<feature type="sequence conflict" description="In Ref. 6; AK067367." evidence="6" ref="6">
    <original>Y</original>
    <variation>F</variation>
    <location>
        <position position="217"/>
    </location>
</feature>
<feature type="sequence conflict" description="In Ref. 6; AK062564." evidence="6" ref="6">
    <original>E</original>
    <variation>G</variation>
    <location>
        <position position="549"/>
    </location>
</feature>
<feature type="sequence conflict" description="In Ref. 6; AK067367." evidence="6" ref="6">
    <original>R</original>
    <variation>G</variation>
    <location>
        <position position="744"/>
    </location>
</feature>
<feature type="sequence conflict" description="In Ref. 6; AK067367." evidence="6" ref="6">
    <original>K</original>
    <variation>E</variation>
    <location>
        <position position="1100"/>
    </location>
</feature>
<name>PETS_ORYSJ</name>
<protein>
    <recommendedName>
        <fullName evidence="5">Polyprotein of EF-Ts, chloroplastic</fullName>
    </recommendedName>
    <component>
        <recommendedName>
            <fullName evidence="5">Plastid-specific ribosomal protein-7, chloroplastic</fullName>
        </recommendedName>
    </component>
    <component>
        <recommendedName>
            <fullName evidence="5">Elongation factor Ts, chloroplastic</fullName>
            <shortName evidence="5">EF-Ts</shortName>
        </recommendedName>
    </component>
</protein>
<gene>
    <name evidence="5" type="primary">PETs</name>
    <name evidence="5" type="synonym">EFTS</name>
    <name evidence="5" type="synonym">PSRP-7</name>
    <name evidence="7" type="ordered locus">LOC_Os12g35630</name>
    <name evidence="11" type="ordered locus">Os12g0541500</name>
    <name evidence="13" type="ORF">OsJ_36392</name>
    <name evidence="12" type="ORF">OSNPB_120541500</name>
</gene>
<evidence type="ECO:0000250" key="1">
    <source>
        <dbReference type="UniProtKB" id="A8J637"/>
    </source>
</evidence>
<evidence type="ECO:0000255" key="2"/>
<evidence type="ECO:0000255" key="3">
    <source>
        <dbReference type="PROSITE-ProRule" id="PRU00180"/>
    </source>
</evidence>
<evidence type="ECO:0000256" key="4">
    <source>
        <dbReference type="SAM" id="MobiDB-lite"/>
    </source>
</evidence>
<evidence type="ECO:0000303" key="5">
    <source>
    </source>
</evidence>
<evidence type="ECO:0000305" key="6"/>
<evidence type="ECO:0000312" key="7">
    <source>
        <dbReference type="EMBL" id="ABA99456.1"/>
    </source>
</evidence>
<evidence type="ECO:0000312" key="8">
    <source>
        <dbReference type="EMBL" id="AK062564"/>
    </source>
</evidence>
<evidence type="ECO:0000312" key="9">
    <source>
        <dbReference type="EMBL" id="AK065699"/>
    </source>
</evidence>
<evidence type="ECO:0000312" key="10">
    <source>
        <dbReference type="EMBL" id="AK069200"/>
    </source>
</evidence>
<evidence type="ECO:0000312" key="11">
    <source>
        <dbReference type="EMBL" id="BAF29975.1"/>
    </source>
</evidence>
<evidence type="ECO:0000312" key="12">
    <source>
        <dbReference type="EMBL" id="BAT17508.1"/>
    </source>
</evidence>
<evidence type="ECO:0000312" key="13">
    <source>
        <dbReference type="EMBL" id="EAZ20768.1"/>
    </source>
</evidence>
<organism>
    <name type="scientific">Oryza sativa subsp. japonica</name>
    <name type="common">Rice</name>
    <dbReference type="NCBI Taxonomy" id="39947"/>
    <lineage>
        <taxon>Eukaryota</taxon>
        <taxon>Viridiplantae</taxon>
        <taxon>Streptophyta</taxon>
        <taxon>Embryophyta</taxon>
        <taxon>Tracheophyta</taxon>
        <taxon>Spermatophyta</taxon>
        <taxon>Magnoliopsida</taxon>
        <taxon>Liliopsida</taxon>
        <taxon>Poales</taxon>
        <taxon>Poaceae</taxon>
        <taxon>BOP clade</taxon>
        <taxon>Oryzoideae</taxon>
        <taxon>Oryzeae</taxon>
        <taxon>Oryzinae</taxon>
        <taxon>Oryza</taxon>
        <taxon>Oryza sativa</taxon>
    </lineage>
</organism>
<accession>Q2QP54</accession>
<accession>A0A0P0YB77</accession>
<accession>Q0IMU0</accession>
<keyword id="KW-0025">Alternative splicing</keyword>
<keyword id="KW-0150">Chloroplast</keyword>
<keyword id="KW-0251">Elongation factor</keyword>
<keyword id="KW-0934">Plastid</keyword>
<keyword id="KW-0648">Protein biosynthesis</keyword>
<keyword id="KW-1185">Reference proteome</keyword>
<keyword id="KW-0677">Repeat</keyword>
<keyword id="KW-0809">Transit peptide</keyword>
<comment type="function">
    <molecule>Elongation factor Ts, chloroplastic</molecule>
    <text evidence="1">Associates with the EF-Tu.GDP complex and induces the exchange of GDP to GTP (By similarity). It remains bound to the aminoacyl-tRNA.EF-Tu.GTP complex up to the GTP hydrolysis stage on the ribosome (By similarity).</text>
</comment>
<comment type="function">
    <molecule>Plastid-specific ribosomal protein-7, chloroplastic</molecule>
    <text evidence="1">Binds to psbD and psbA 5'-untranslated regions (UTRs) in vitro.</text>
</comment>
<comment type="subunit">
    <molecule>Plastid-specific ribosomal protein-7, chloroplastic</molecule>
    <text evidence="1">Component of the chloroplast ribosome 30S and 70S subunits, as well as polysomes.</text>
</comment>
<comment type="subunit">
    <molecule>Polyprotein of EF-Ts, chloroplastic</molecule>
    <text evidence="1">Component of the chloroplast ribosome 70S subunit, and at low levels, present in polysomes.</text>
</comment>
<comment type="subunit">
    <molecule>Elongation factor Ts, chloroplastic</molecule>
    <text evidence="1">Associates transiently with chloroplast polysomes.</text>
</comment>
<comment type="subcellular location">
    <subcellularLocation>
        <location evidence="1">Plastid</location>
        <location evidence="1">Chloroplast</location>
    </subcellularLocation>
</comment>
<comment type="alternative products">
    <event type="alternative splicing"/>
    <isoform>
        <id>Q2QP54-1</id>
        <name>1</name>
        <sequence type="displayed"/>
    </isoform>
    <isoform>
        <id>Q2QP54-2</id>
        <name evidence="8 10">2</name>
        <sequence type="described" ref="VSP_060535 VSP_060536"/>
    </isoform>
    <isoform>
        <id>Q2QP54-3</id>
        <name evidence="9">3</name>
        <sequence type="described" ref="VSP_060534"/>
    </isoform>
</comment>
<comment type="similarity">
    <molecule>Elongation factor Ts, chloroplastic</molecule>
    <text evidence="6">Belongs to the EF-Ts family.</text>
</comment>
<proteinExistence type="evidence at transcript level"/>